<accession>P28105</accession>
<comment type="function">
    <text evidence="1 2">Ligand for members of the frizzled family of seven transmembrane receptors that functions in the canonical Wnt/beta-catenin signaling pathway (By similarity). Plays an important role in embryonic development, including dorsal versus ventral patterning during limb development, skeleton development and urogenital tract development. Required for central nervous system (CNS) angiogenesis and blood-brain barrier regulation (By similarity).</text>
</comment>
<comment type="subunit">
    <text evidence="1 2">Forms a soluble 1:1 complex with AFM; this prevents oligomerization and is required for prolonged biological activity. The complex with AFM may represent the physiological form in body fluids (By similarity). Interacts with FZD5. Interacts with PORCN (By similarity).</text>
</comment>
<comment type="subcellular location">
    <subcellularLocation>
        <location evidence="2">Secreted</location>
        <location evidence="2">Extracellular space</location>
        <location evidence="2">Extracellular matrix</location>
    </subcellularLocation>
    <subcellularLocation>
        <location evidence="2">Secreted</location>
    </subcellularLocation>
</comment>
<comment type="PTM">
    <text evidence="3 5">Palmitoleoylation is required for efficient binding to frizzled receptors. Depalmitoleoylation leads to Wnt signaling pathway inhibition.</text>
</comment>
<comment type="similarity">
    <text evidence="7">Belongs to the Wnt family.</text>
</comment>
<sequence length="123" mass="14274">SGSCTTKTCWTMLPKFRELGYILKEKYNEAVQVEPVRTHRNKRPVFLKIKKPLSYRKPMVTDLVYIEKSPNYCEEDPITGSVGTQGRMCNKTSSQNNSCDLMCCGRGYNTHQYSRVWQCNCKF</sequence>
<evidence type="ECO:0000250" key="1">
    <source>
        <dbReference type="UniProtKB" id="O00755"/>
    </source>
</evidence>
<evidence type="ECO:0000250" key="2">
    <source>
        <dbReference type="UniProtKB" id="P24383"/>
    </source>
</evidence>
<evidence type="ECO:0000250" key="3">
    <source>
        <dbReference type="UniProtKB" id="P27467"/>
    </source>
</evidence>
<evidence type="ECO:0000250" key="4">
    <source>
        <dbReference type="UniProtKB" id="P28026"/>
    </source>
</evidence>
<evidence type="ECO:0000250" key="5">
    <source>
        <dbReference type="UniProtKB" id="P56704"/>
    </source>
</evidence>
<evidence type="ECO:0000255" key="6"/>
<evidence type="ECO:0000305" key="7"/>
<name>WNT7A_ALOVU</name>
<gene>
    <name type="primary">WNT-7A</name>
</gene>
<feature type="chain" id="PRO_0000200645" description="Protein Wnt-7a">
    <location>
        <begin position="1" status="less than"/>
        <end position="123" status="greater than"/>
    </location>
</feature>
<feature type="region of interest" description="Disordered linker" evidence="1">
    <location>
        <begin position="33"/>
        <end position="61"/>
    </location>
</feature>
<feature type="lipid moiety-binding region" description="O-palmitoleoyl serine; by PORCN" evidence="5">
    <location>
        <position position="1"/>
    </location>
</feature>
<feature type="glycosylation site" description="N-linked (GlcNAc...) asparagine" evidence="6">
    <location>
        <position position="90"/>
    </location>
</feature>
<feature type="glycosylation site" description="N-linked (GlcNAc...) asparagine" evidence="6">
    <location>
        <position position="96"/>
    </location>
</feature>
<feature type="disulfide bond" evidence="4">
    <location>
        <begin position="89"/>
        <end position="104"/>
    </location>
</feature>
<feature type="non-terminal residue">
    <location>
        <position position="1"/>
    </location>
</feature>
<feature type="non-terminal residue">
    <location>
        <position position="123"/>
    </location>
</feature>
<proteinExistence type="inferred from homology"/>
<reference key="1">
    <citation type="journal article" date="1992" name="Proc. Natl. Acad. Sci. U.S.A.">
        <title>Diversification of the Wnt gene family on the ancestral lineage of vertebrates.</title>
        <authorList>
            <person name="Sidow A."/>
        </authorList>
    </citation>
    <scope>NUCLEOTIDE SEQUENCE [GENOMIC DNA]</scope>
</reference>
<organism>
    <name type="scientific">Alopias vulpinus</name>
    <name type="common">Common thresher shark</name>
    <name type="synonym">Squalus vulpinus</name>
    <dbReference type="NCBI Taxonomy" id="7852"/>
    <lineage>
        <taxon>Eukaryota</taxon>
        <taxon>Metazoa</taxon>
        <taxon>Chordata</taxon>
        <taxon>Craniata</taxon>
        <taxon>Vertebrata</taxon>
        <taxon>Chondrichthyes</taxon>
        <taxon>Elasmobranchii</taxon>
        <taxon>Galeomorphii</taxon>
        <taxon>Galeoidea</taxon>
        <taxon>Lamniformes</taxon>
        <taxon>Alopiidae</taxon>
        <taxon>Alopias</taxon>
    </lineage>
</organism>
<dbReference type="EMBL" id="M91256">
    <property type="protein sequence ID" value="AAA48542.1"/>
    <property type="molecule type" value="Genomic_DNA"/>
</dbReference>
<dbReference type="SMR" id="P28105"/>
<dbReference type="GlyCosmos" id="P28105">
    <property type="glycosylation" value="2 sites, No reported glycans"/>
</dbReference>
<dbReference type="GO" id="GO:0005615">
    <property type="term" value="C:extracellular space"/>
    <property type="evidence" value="ECO:0007669"/>
    <property type="project" value="TreeGrafter"/>
</dbReference>
<dbReference type="GO" id="GO:0005125">
    <property type="term" value="F:cytokine activity"/>
    <property type="evidence" value="ECO:0007669"/>
    <property type="project" value="TreeGrafter"/>
</dbReference>
<dbReference type="GO" id="GO:0005109">
    <property type="term" value="F:frizzled binding"/>
    <property type="evidence" value="ECO:0007669"/>
    <property type="project" value="TreeGrafter"/>
</dbReference>
<dbReference type="GO" id="GO:0048513">
    <property type="term" value="P:animal organ development"/>
    <property type="evidence" value="ECO:0007669"/>
    <property type="project" value="UniProtKB-ARBA"/>
</dbReference>
<dbReference type="GO" id="GO:0060070">
    <property type="term" value="P:canonical Wnt signaling pathway"/>
    <property type="evidence" value="ECO:0007669"/>
    <property type="project" value="TreeGrafter"/>
</dbReference>
<dbReference type="GO" id="GO:0045165">
    <property type="term" value="P:cell fate commitment"/>
    <property type="evidence" value="ECO:0007669"/>
    <property type="project" value="TreeGrafter"/>
</dbReference>
<dbReference type="GO" id="GO:0030182">
    <property type="term" value="P:neuron differentiation"/>
    <property type="evidence" value="ECO:0007669"/>
    <property type="project" value="TreeGrafter"/>
</dbReference>
<dbReference type="GO" id="GO:0046330">
    <property type="term" value="P:positive regulation of JNK cascade"/>
    <property type="evidence" value="ECO:0007669"/>
    <property type="project" value="TreeGrafter"/>
</dbReference>
<dbReference type="Gene3D" id="3.30.2460.20">
    <property type="match status" value="1"/>
</dbReference>
<dbReference type="InterPro" id="IPR005817">
    <property type="entry name" value="Wnt"/>
</dbReference>
<dbReference type="InterPro" id="IPR013300">
    <property type="entry name" value="Wnt7"/>
</dbReference>
<dbReference type="InterPro" id="IPR043158">
    <property type="entry name" value="Wnt_C"/>
</dbReference>
<dbReference type="PANTHER" id="PTHR12027:SF78">
    <property type="entry name" value="PROTEIN WNT-7A"/>
    <property type="match status" value="1"/>
</dbReference>
<dbReference type="PANTHER" id="PTHR12027">
    <property type="entry name" value="WNT RELATED"/>
    <property type="match status" value="1"/>
</dbReference>
<dbReference type="Pfam" id="PF00110">
    <property type="entry name" value="wnt"/>
    <property type="match status" value="1"/>
</dbReference>
<dbReference type="PRINTS" id="PR01891">
    <property type="entry name" value="WNT7PROTEIN"/>
</dbReference>
<dbReference type="SMART" id="SM00097">
    <property type="entry name" value="WNT1"/>
    <property type="match status" value="1"/>
</dbReference>
<protein>
    <recommendedName>
        <fullName>Protein Wnt-7a</fullName>
    </recommendedName>
</protein>
<keyword id="KW-0217">Developmental protein</keyword>
<keyword id="KW-1015">Disulfide bond</keyword>
<keyword id="KW-0272">Extracellular matrix</keyword>
<keyword id="KW-0325">Glycoprotein</keyword>
<keyword id="KW-0449">Lipoprotein</keyword>
<keyword id="KW-0964">Secreted</keyword>
<keyword id="KW-0879">Wnt signaling pathway</keyword>